<accession>Q197E6</accession>
<evidence type="ECO:0000250" key="1"/>
<evidence type="ECO:0000305" key="2"/>
<comment type="function">
    <text evidence="1">Major capsid protein that self assembles to form an icosahedral capsid. Represents around 50% of the total virion protein mass (By similarity).</text>
</comment>
<comment type="subunit">
    <text evidence="1">Homotrimer.</text>
</comment>
<comment type="subcellular location">
    <subcellularLocation>
        <location evidence="2">Virion</location>
    </subcellularLocation>
</comment>
<comment type="similarity">
    <text evidence="2">Belongs to the NCLDV major capsid protein family.</text>
</comment>
<proteinExistence type="inferred from homology"/>
<gene>
    <name type="primary">MCP</name>
    <name type="ORF">IIV3-014L</name>
</gene>
<organism>
    <name type="scientific">Invertebrate iridescent virus 3</name>
    <name type="common">IIV-3</name>
    <name type="synonym">Mosquito iridescent virus</name>
    <dbReference type="NCBI Taxonomy" id="345201"/>
    <lineage>
        <taxon>Viruses</taxon>
        <taxon>Varidnaviria</taxon>
        <taxon>Bamfordvirae</taxon>
        <taxon>Nucleocytoviricota</taxon>
        <taxon>Megaviricetes</taxon>
        <taxon>Pimascovirales</taxon>
        <taxon>Iridoviridae</taxon>
        <taxon>Betairidovirinae</taxon>
        <taxon>Chloriridovirus</taxon>
    </lineage>
</organism>
<organismHost>
    <name type="scientific">Aedes vexans</name>
    <name type="common">Inland floodwater mosquito</name>
    <name type="synonym">Culex vexans</name>
    <dbReference type="NCBI Taxonomy" id="7163"/>
</organismHost>
<organismHost>
    <name type="scientific">Culex territans</name>
    <dbReference type="NCBI Taxonomy" id="42431"/>
</organismHost>
<organismHost>
    <name type="scientific">Culiseta annulata</name>
    <dbReference type="NCBI Taxonomy" id="332058"/>
</organismHost>
<organismHost>
    <name type="scientific">Ochlerotatus sollicitans</name>
    <name type="common">eastern saltmarsh mosquito</name>
    <dbReference type="NCBI Taxonomy" id="310513"/>
</organismHost>
<organismHost>
    <name type="scientific">Ochlerotatus taeniorhynchus</name>
    <name type="common">Black salt marsh mosquito</name>
    <name type="synonym">Aedes taeniorhynchus</name>
    <dbReference type="NCBI Taxonomy" id="329105"/>
</organismHost>
<organismHost>
    <name type="scientific">Psorophora ferox</name>
    <dbReference type="NCBI Taxonomy" id="7183"/>
</organismHost>
<keyword id="KW-0167">Capsid protein</keyword>
<keyword id="KW-0426">Late protein</keyword>
<keyword id="KW-1185">Reference proteome</keyword>
<keyword id="KW-0946">Virion</keyword>
<dbReference type="EMBL" id="DQ643392">
    <property type="protein sequence ID" value="ABF82044.1"/>
    <property type="molecule type" value="Genomic_DNA"/>
</dbReference>
<dbReference type="RefSeq" id="YP_654586.1">
    <property type="nucleotide sequence ID" value="NC_008187.1"/>
</dbReference>
<dbReference type="SMR" id="Q197E6"/>
<dbReference type="KEGG" id="vg:4156263"/>
<dbReference type="OrthoDB" id="5386at10239"/>
<dbReference type="Proteomes" id="UP000001358">
    <property type="component" value="Genome"/>
</dbReference>
<dbReference type="GO" id="GO:0019028">
    <property type="term" value="C:viral capsid"/>
    <property type="evidence" value="ECO:0007669"/>
    <property type="project" value="UniProtKB-KW"/>
</dbReference>
<dbReference type="GO" id="GO:0005198">
    <property type="term" value="F:structural molecule activity"/>
    <property type="evidence" value="ECO:0007669"/>
    <property type="project" value="InterPro"/>
</dbReference>
<dbReference type="Gene3D" id="2.70.9.10">
    <property type="entry name" value="Adenovirus Type 2 Hexon, domain 4"/>
    <property type="match status" value="1"/>
</dbReference>
<dbReference type="Gene3D" id="2.70.9.20">
    <property type="entry name" value="Major capsid protein Vp54"/>
    <property type="match status" value="1"/>
</dbReference>
<dbReference type="InterPro" id="IPR031654">
    <property type="entry name" value="Capsid_N"/>
</dbReference>
<dbReference type="InterPro" id="IPR007542">
    <property type="entry name" value="MCP_C"/>
</dbReference>
<dbReference type="InterPro" id="IPR038519">
    <property type="entry name" value="MCP_C_sf"/>
</dbReference>
<dbReference type="InterPro" id="IPR016112">
    <property type="entry name" value="VP_dsDNA_II"/>
</dbReference>
<dbReference type="Pfam" id="PF16903">
    <property type="entry name" value="Capsid_N"/>
    <property type="match status" value="1"/>
</dbReference>
<dbReference type="Pfam" id="PF04451">
    <property type="entry name" value="Capsid_NCLDV"/>
    <property type="match status" value="1"/>
</dbReference>
<dbReference type="SUPFAM" id="SSF49749">
    <property type="entry name" value="Group II dsDNA viruses VP"/>
    <property type="match status" value="2"/>
</dbReference>
<sequence length="466" mass="50988">MSSSITSGFIDLATVDEIEKYMYGLPDDGVSMAHTLTYFVREFKKSTWFTQVPVPLSRSTGTSDFGQNWSVSISRAGDYLLQTWLRVTIPQVTLAATATPATLSLRWTRNLMHNLIREITISFNDLVGSRLDNYFLDMWSAFTTPASKRNGYDNMIGNISTLTDPVGPGGSLGHTGGTVLNLPISLFFTRDTGVSLPTAALPYNEIQLNFSMRDWKDLLILTDTAITTGNPYQTIDVSKHLGGVAPSLSNVQVWANYAIVSNVERKKMGCGVRDILIEQVQTAPRQNYTPSTNPMPSFDIRFSHAVKVLFFAVRNKTSAAEWSNYGTSSPVVSGTSVNYEPSGSFDPIATTTLIYENSNRLGTMGSDYYSLVSPWYHAPTIPSFIGYHMYSYSLNFFDLDPMGSTNYGKLTNVSIVPHASDAAVKASTGAGDGAGANYNQSYEFIVMAVNNNIVRISGGCLGFPVL</sequence>
<feature type="chain" id="PRO_0000377514" description="Major capsid protein">
    <location>
        <begin position="1"/>
        <end position="466"/>
    </location>
</feature>
<name>MCP_IIV3</name>
<reference key="1">
    <citation type="journal article" date="2006" name="J. Virol.">
        <title>Genome of invertebrate iridescent virus type 3 (mosquito iridescent virus).</title>
        <authorList>
            <person name="Delhon G."/>
            <person name="Tulman E.R."/>
            <person name="Afonso C.L."/>
            <person name="Lu Z."/>
            <person name="Becnel J.J."/>
            <person name="Moser B.A."/>
            <person name="Kutish G.F."/>
            <person name="Rock D.L."/>
        </authorList>
    </citation>
    <scope>NUCLEOTIDE SEQUENCE [LARGE SCALE GENOMIC DNA]</scope>
</reference>
<protein>
    <recommendedName>
        <fullName>Major capsid protein</fullName>
        <shortName>MCP</shortName>
    </recommendedName>
</protein>